<proteinExistence type="evidence at protein level"/>
<feature type="initiator methionine" description="Removed" evidence="29">
    <location>
        <position position="1"/>
    </location>
</feature>
<feature type="chain" id="PRO_0000056201" description="Tripartite motif-containing protein 5">
    <location>
        <begin position="2"/>
        <end position="493"/>
    </location>
</feature>
<feature type="domain" description="B30.2/SPRY" evidence="6">
    <location>
        <begin position="281"/>
        <end position="493"/>
    </location>
</feature>
<feature type="zinc finger region" description="RING-type" evidence="5">
    <location>
        <begin position="15"/>
        <end position="59"/>
    </location>
</feature>
<feature type="zinc finger region" description="B box-type" evidence="4">
    <location>
        <begin position="90"/>
        <end position="132"/>
    </location>
</feature>
<feature type="region of interest" description="Required for interaction with GABARAP and for autophagy" evidence="2">
    <location>
        <begin position="185"/>
        <end position="198"/>
    </location>
</feature>
<feature type="coiled-coil region" evidence="3">
    <location>
        <begin position="130"/>
        <end position="241"/>
    </location>
</feature>
<feature type="binding site" evidence="4">
    <location>
        <position position="95"/>
    </location>
    <ligand>
        <name>Zn(2+)</name>
        <dbReference type="ChEBI" id="CHEBI:29105"/>
    </ligand>
</feature>
<feature type="binding site" evidence="4">
    <location>
        <position position="98"/>
    </location>
    <ligand>
        <name>Zn(2+)</name>
        <dbReference type="ChEBI" id="CHEBI:29105"/>
    </ligand>
</feature>
<feature type="binding site" evidence="4">
    <location>
        <position position="117"/>
    </location>
    <ligand>
        <name>Zn(2+)</name>
        <dbReference type="ChEBI" id="CHEBI:29105"/>
    </ligand>
</feature>
<feature type="binding site" evidence="4">
    <location>
        <position position="123"/>
    </location>
    <ligand>
        <name>Zn(2+)</name>
        <dbReference type="ChEBI" id="CHEBI:29105"/>
    </ligand>
</feature>
<feature type="modified residue" description="N-acetylalanine" evidence="29">
    <location>
        <position position="2"/>
    </location>
</feature>
<feature type="modified residue" description="Phosphoserine" evidence="30">
    <location>
        <position position="86"/>
    </location>
</feature>
<feature type="splice variant" id="VSP_009016" description="In isoform Epsilon." evidence="25 27">
    <original>GVDGVIKRTENVTLKKPETFPKN</original>
    <variation>DGERDLEEARNFSKKSKESVSSS</variation>
    <location>
        <begin position="249"/>
        <end position="271"/>
    </location>
</feature>
<feature type="splice variant" id="VSP_044095" description="In isoform Iota." evidence="28">
    <original>GVDGVIKRT</original>
    <variation>VKSGKKPEH</variation>
    <location>
        <begin position="249"/>
        <end position="257"/>
    </location>
</feature>
<feature type="splice variant" id="VSP_044096" description="In isoform Iota." evidence="28">
    <location>
        <begin position="258"/>
        <end position="493"/>
    </location>
</feature>
<feature type="splice variant" id="VSP_009017" description="In isoform Epsilon." evidence="25 27">
    <location>
        <begin position="272"/>
        <end position="493"/>
    </location>
</feature>
<feature type="splice variant" id="VSP_009012" description="In isoform Gamma." evidence="25 26">
    <original>VDVTVAPNNISCAVISEDKRQVSSPKPQIIYGARGTRYQTFVNFNYCTG</original>
    <variation>GKEKSHYHKPPCGLSLLLSLSFRILCSLLGSCFKIYDSPSKTHITYPSL</variation>
    <location>
        <begin position="299"/>
        <end position="347"/>
    </location>
</feature>
<feature type="splice variant" id="VSP_009014" description="In isoform Delta." evidence="25">
    <original>VDVTVAPNNISCAVISEDKRQVSSPKPQ</original>
    <variation>GWSAMARSRFTATSTSQIQAILLPQPPK</variation>
    <location>
        <begin position="299"/>
        <end position="326"/>
    </location>
</feature>
<feature type="splice variant" id="VSP_009015" description="In isoform Delta." evidence="25">
    <location>
        <begin position="327"/>
        <end position="493"/>
    </location>
</feature>
<feature type="splice variant" id="VSP_009013" description="In isoform Gamma." evidence="25 26">
    <location>
        <begin position="348"/>
        <end position="493"/>
    </location>
</feature>
<feature type="splice variant" id="VSP_009010" description="In isoform Beta." evidence="25">
    <original>NENYQPKYGYW</original>
    <variation>KRFMILLPRHT</variation>
    <location>
        <begin position="390"/>
        <end position="400"/>
    </location>
</feature>
<feature type="splice variant" id="VSP_009011" description="In isoform Beta." evidence="25">
    <location>
        <begin position="401"/>
        <end position="493"/>
    </location>
</feature>
<feature type="sequence variant" id="VAR_060707" description="In dbSNP:rs59896509." evidence="24">
    <original>G</original>
    <variation>S</variation>
    <location>
        <position position="31"/>
    </location>
</feature>
<feature type="sequence variant" id="VAR_017397" description="In dbSNP:rs3740996." evidence="10 24">
    <original>H</original>
    <variation>Y</variation>
    <location>
        <position position="43"/>
    </location>
</feature>
<feature type="sequence variant" id="VAR_060708" description="In dbSNP:rs61432120." evidence="24">
    <original>C</original>
    <variation>Y</variation>
    <location>
        <position position="58"/>
    </location>
</feature>
<feature type="sequence variant" id="VAR_060709" description="In dbSNP:rs56348930." evidence="24">
    <original>G</original>
    <variation>E</variation>
    <location>
        <position position="110"/>
    </location>
</feature>
<feature type="sequence variant" id="VAR_030154" description="In dbSNP:rs11601507." evidence="24">
    <original>V</original>
    <variation>F</variation>
    <location>
        <position position="112"/>
    </location>
</feature>
<feature type="sequence variant" id="VAR_017398" description="In dbSNP:rs10838525." evidence="7 9 13 24">
    <original>R</original>
    <variation>Q</variation>
    <location>
        <position position="136"/>
    </location>
</feature>
<feature type="sequence variant" id="VAR_030155" description="In dbSNP:rs11038628." evidence="10 24">
    <original>G</original>
    <variation>D</variation>
    <location>
        <position position="249"/>
    </location>
</feature>
<feature type="sequence variant" id="VAR_030156" description="In dbSNP:rs28381981." evidence="24">
    <original>H</original>
    <variation>Y</variation>
    <location>
        <position position="419"/>
    </location>
</feature>
<feature type="sequence variant" id="VAR_060710" description="In dbSNP:rs59218593." evidence="24">
    <original>C</original>
    <variation>S</variation>
    <location>
        <position position="467"/>
    </location>
</feature>
<feature type="sequence variant" id="VAR_030157" description="In dbSNP:rs7104422." evidence="24">
    <original>P</original>
    <variation>L</variation>
    <location>
        <position position="479"/>
    </location>
</feature>
<feature type="mutagenesis site" description="Abolishes E3 ligase activity." evidence="13">
    <original>C</original>
    <variation>A</variation>
    <location>
        <position position="15"/>
    </location>
</feature>
<feature type="mutagenesis site" description="Increases strongly cell restriction against HIV-1 and SIVmac infection." evidence="11">
    <original>R</original>
    <variation>A</variation>
    <variation>G</variation>
    <variation>H</variation>
    <variation>P</variation>
    <variation>Q</variation>
    <variation>S</variation>
    <location>
        <position position="332"/>
    </location>
</feature>
<feature type="mutagenesis site" description="Increases strongly cell restriction against HIV-1 infection." evidence="11">
    <original>R</original>
    <variation>D</variation>
    <variation>E</variation>
    <variation>L</variation>
    <location>
        <position position="332"/>
    </location>
</feature>
<feature type="mutagenesis site" description="No effect on HIV-1 and SIVmac infection." evidence="11">
    <original>R</original>
    <variation>K</variation>
    <location>
        <position position="332"/>
    </location>
</feature>
<feature type="sequence conflict" description="In Ref. 2; BAB55218." evidence="28" ref="2">
    <original>I</original>
    <variation>L</variation>
    <location>
        <position position="76"/>
    </location>
</feature>
<feature type="sequence conflict" description="In Ref. 2; BAB55218." evidence="28" ref="2">
    <original>L</original>
    <variation>P</variation>
    <location>
        <position position="130"/>
    </location>
</feature>
<feature type="turn" evidence="31">
    <location>
        <begin position="16"/>
        <end position="18"/>
    </location>
</feature>
<feature type="strand" evidence="31">
    <location>
        <begin position="29"/>
        <end position="31"/>
    </location>
</feature>
<feature type="helix" evidence="31">
    <location>
        <begin position="38"/>
        <end position="45"/>
    </location>
</feature>
<feature type="turn" evidence="31">
    <location>
        <begin position="46"/>
        <end position="50"/>
    </location>
</feature>
<feature type="turn" evidence="31">
    <location>
        <begin position="56"/>
        <end position="58"/>
    </location>
</feature>
<feature type="strand" evidence="31">
    <location>
        <begin position="64"/>
        <end position="66"/>
    </location>
</feature>
<feature type="strand" evidence="32">
    <location>
        <begin position="92"/>
        <end position="94"/>
    </location>
</feature>
<feature type="turn" evidence="32">
    <location>
        <begin position="96"/>
        <end position="98"/>
    </location>
</feature>
<feature type="strand" evidence="32">
    <location>
        <begin position="104"/>
        <end position="106"/>
    </location>
</feature>
<feature type="turn" evidence="32">
    <location>
        <begin position="107"/>
        <end position="109"/>
    </location>
</feature>
<feature type="strand" evidence="32">
    <location>
        <begin position="111"/>
        <end position="113"/>
    </location>
</feature>
<feature type="helix" evidence="32">
    <location>
        <begin position="115"/>
        <end position="118"/>
    </location>
</feature>
<feature type="turn" evidence="32">
    <location>
        <begin position="121"/>
        <end position="125"/>
    </location>
</feature>
<feature type="strand" evidence="32">
    <location>
        <begin position="128"/>
        <end position="130"/>
    </location>
</feature>
<organism>
    <name type="scientific">Homo sapiens</name>
    <name type="common">Human</name>
    <dbReference type="NCBI Taxonomy" id="9606"/>
    <lineage>
        <taxon>Eukaryota</taxon>
        <taxon>Metazoa</taxon>
        <taxon>Chordata</taxon>
        <taxon>Craniata</taxon>
        <taxon>Vertebrata</taxon>
        <taxon>Euteleostomi</taxon>
        <taxon>Mammalia</taxon>
        <taxon>Eutheria</taxon>
        <taxon>Euarchontoglires</taxon>
        <taxon>Primates</taxon>
        <taxon>Haplorrhini</taxon>
        <taxon>Catarrhini</taxon>
        <taxon>Hominidae</taxon>
        <taxon>Homo</taxon>
    </lineage>
</organism>
<sequence length="493" mass="56338">MASGILVNVKEEVTCPICLELLTQPLSLDCGHSFCQACLTANHKKSMLDKGESSCPVCRISYQPENIRPNRHVANIVEKLREVKLSPEGQKVDHCARHGEKLLLFCQEDGKVICWLCERSQEHRGHHTFLTEEVAREYQVKLQAALEMLRQKQQEAEELEADIREEKASWKTQIQYDKTNVLADFEQLRDILDWEESNELQNLEKEEEDILKSLTNSETEMVQQTQSLRELISDLEHRLQGSVMELLQGVDGVIKRTENVTLKKPETFPKNQRRVFRAPDLKGMLEVFRELTDVRRYWVDVTVAPNNISCAVISEDKRQVSSPKPQIIYGARGTRYQTFVNFNYCTGILGSQSITSGKHYWEVDVSKKTAWILGVCAGFQPDAMCNIEKNENYQPKYGYWVIGLEEGVKCSAFQDSSFHTPSVPFIVPLSVIICPDRVGVFLDYEACTVSFFNITNHGFLIYKFSHCSFSQPVFPYLNPRKCGVPMTLCSPSS</sequence>
<name>TRIM5_HUMAN</name>
<accession>Q9C035</accession>
<accession>A6NGQ1</accession>
<accession>A8WFA8</accession>
<accession>D3DQS8</accession>
<accession>D3DQS9</accession>
<accession>G3GJY1</accession>
<accession>Q2MLV4</accession>
<accession>Q2MLV8</accession>
<accession>Q2MLV9</accession>
<accession>Q2MLW1</accession>
<accession>Q2MLW3</accession>
<accession>Q2MLW4</accession>
<accession>Q2MLW6</accession>
<accession>Q2MLW7</accession>
<accession>Q2MLX1</accession>
<accession>Q2MLX2</accession>
<accession>Q2MLX3</accession>
<accession>Q2MLX5</accession>
<accession>Q2MLY3</accession>
<accession>Q2MLY4</accession>
<accession>Q2V6Q6</accession>
<accession>Q6GX26</accession>
<accession>Q8WU46</accession>
<accession>Q96SR5</accession>
<accession>Q9C031</accession>
<accession>Q9C032</accession>
<accession>Q9C033</accession>
<accession>Q9C034</accession>
<keyword id="KW-0002">3D-structure</keyword>
<keyword id="KW-0007">Acetylation</keyword>
<keyword id="KW-0025">Alternative splicing</keyword>
<keyword id="KW-0051">Antiviral defense</keyword>
<keyword id="KW-0072">Autophagy</keyword>
<keyword id="KW-0175">Coiled coil</keyword>
<keyword id="KW-0963">Cytoplasm</keyword>
<keyword id="KW-0945">Host-virus interaction</keyword>
<keyword id="KW-0391">Immunity</keyword>
<keyword id="KW-0399">Innate immunity</keyword>
<keyword id="KW-0479">Metal-binding</keyword>
<keyword id="KW-0539">Nucleus</keyword>
<keyword id="KW-0597">Phosphoprotein</keyword>
<keyword id="KW-1267">Proteomics identification</keyword>
<keyword id="KW-1185">Reference proteome</keyword>
<keyword id="KW-0808">Transferase</keyword>
<keyword id="KW-0832">Ubl conjugation</keyword>
<keyword id="KW-0833">Ubl conjugation pathway</keyword>
<keyword id="KW-0862">Zinc</keyword>
<keyword id="KW-0863">Zinc-finger</keyword>
<reference key="1">
    <citation type="journal article" date="2001" name="EMBO J.">
        <title>The tripartite motif family identifies cell compartments.</title>
        <authorList>
            <person name="Reymond A."/>
            <person name="Meroni G."/>
            <person name="Fantozzi A."/>
            <person name="Merla G."/>
            <person name="Cairo S."/>
            <person name="Luzi L."/>
            <person name="Riganelli D."/>
            <person name="Zanaria E."/>
            <person name="Messali S."/>
            <person name="Cainarca S."/>
            <person name="Guffanti A."/>
            <person name="Minucci S."/>
            <person name="Pelicci P.G."/>
            <person name="Ballabio A."/>
        </authorList>
    </citation>
    <scope>NUCLEOTIDE SEQUENCE [MRNA] (ISOFORMS ALPHA; BETA; GAMMA; DELTA AND EPSILON)</scope>
    <scope>VARIANT GLN-136</scope>
</reference>
<reference key="2">
    <citation type="journal article" date="2004" name="Proc. Natl. Acad. Sci. U.S.A.">
        <title>Trim5alpha protein restricts both HIV-1 and murine leukemia virus.</title>
        <authorList>
            <person name="Yap M.W."/>
            <person name="Nisole S."/>
            <person name="Lynch C."/>
            <person name="Stoye J.P."/>
        </authorList>
    </citation>
    <scope>NUCLEOTIDE SEQUENCE [MRNA] (ISOFORM ALPHA)</scope>
</reference>
<reference key="3">
    <citation type="journal article" date="2006" name="Curr. Biol.">
        <title>High-frequency persistence of an impaired allele of the retroviral defense gene TRIM5alpha in humans.</title>
        <authorList>
            <person name="Sawyer S.L."/>
            <person name="Wu L.I."/>
            <person name="Akey J.M."/>
            <person name="Emerman M."/>
            <person name="Malik H.S."/>
        </authorList>
    </citation>
    <scope>NUCLEOTIDE SEQUENCE [GENOMIC DNA] (ISOFORM ALPHA)</scope>
    <scope>VARIANTS TYR-43 AND ASP-249</scope>
</reference>
<reference key="4">
    <citation type="journal article" date="2008" name="FEBS J.">
        <title>Ubiquitination of E3 ubiquitin ligase TRIM5 alpha and its potential role.</title>
        <authorList>
            <person name="Yamauchi K."/>
            <person name="Wada K."/>
            <person name="Tanji K."/>
            <person name="Tanaka M."/>
            <person name="Kamitani T."/>
        </authorList>
    </citation>
    <scope>NUCLEOTIDE SEQUENCE [MRNA]</scope>
    <scope>VARIANT GLN-136</scope>
    <scope>FUNCTION</scope>
    <scope>AUTOUBIQUITINATION</scope>
    <scope>UBIQUITINATION BY TRIM21</scope>
    <scope>MUTAGENESIS OF CYS-15</scope>
    <source>
        <tissue>Brain</tissue>
    </source>
</reference>
<reference key="5">
    <citation type="journal article" date="2011" name="J. Virol.">
        <title>Modulation of TRIM5alpha activity in human cells by alternatively spliced TRIM5 isoforms.</title>
        <authorList>
            <person name="Battivelli E."/>
            <person name="Migraine J."/>
            <person name="Lecossier D."/>
            <person name="Matsuoka S."/>
            <person name="Perez-Bercoff D."/>
            <person name="Saragosti S."/>
            <person name="Clavel F."/>
            <person name="Hance A.J."/>
        </authorList>
    </citation>
    <scope>NUCLEOTIDE SEQUENCE [MRNA] (ISOFORM EPSILON)</scope>
    <scope>ALTERNATIVE SPLICING</scope>
    <scope>FUNCTION</scope>
</reference>
<reference key="6">
    <citation type="journal article" date="2004" name="Nat. Genet.">
        <title>Complete sequencing and characterization of 21,243 full-length human cDNAs.</title>
        <authorList>
            <person name="Ota T."/>
            <person name="Suzuki Y."/>
            <person name="Nishikawa T."/>
            <person name="Otsuki T."/>
            <person name="Sugiyama T."/>
            <person name="Irie R."/>
            <person name="Wakamatsu A."/>
            <person name="Hayashi K."/>
            <person name="Sato H."/>
            <person name="Nagai K."/>
            <person name="Kimura K."/>
            <person name="Makita H."/>
            <person name="Sekine M."/>
            <person name="Obayashi M."/>
            <person name="Nishi T."/>
            <person name="Shibahara T."/>
            <person name="Tanaka T."/>
            <person name="Ishii S."/>
            <person name="Yamamoto J."/>
            <person name="Saito K."/>
            <person name="Kawai Y."/>
            <person name="Isono Y."/>
            <person name="Nakamura Y."/>
            <person name="Nagahari K."/>
            <person name="Murakami K."/>
            <person name="Yasuda T."/>
            <person name="Iwayanagi T."/>
            <person name="Wagatsuma M."/>
            <person name="Shiratori A."/>
            <person name="Sudo H."/>
            <person name="Hosoiri T."/>
            <person name="Kaku Y."/>
            <person name="Kodaira H."/>
            <person name="Kondo H."/>
            <person name="Sugawara M."/>
            <person name="Takahashi M."/>
            <person name="Kanda K."/>
            <person name="Yokoi T."/>
            <person name="Furuya T."/>
            <person name="Kikkawa E."/>
            <person name="Omura Y."/>
            <person name="Abe K."/>
            <person name="Kamihara K."/>
            <person name="Katsuta N."/>
            <person name="Sato K."/>
            <person name="Tanikawa M."/>
            <person name="Yamazaki M."/>
            <person name="Ninomiya K."/>
            <person name="Ishibashi T."/>
            <person name="Yamashita H."/>
            <person name="Murakawa K."/>
            <person name="Fujimori K."/>
            <person name="Tanai H."/>
            <person name="Kimata M."/>
            <person name="Watanabe M."/>
            <person name="Hiraoka S."/>
            <person name="Chiba Y."/>
            <person name="Ishida S."/>
            <person name="Ono Y."/>
            <person name="Takiguchi S."/>
            <person name="Watanabe S."/>
            <person name="Yosida M."/>
            <person name="Hotuta T."/>
            <person name="Kusano J."/>
            <person name="Kanehori K."/>
            <person name="Takahashi-Fujii A."/>
            <person name="Hara H."/>
            <person name="Tanase T.-O."/>
            <person name="Nomura Y."/>
            <person name="Togiya S."/>
            <person name="Komai F."/>
            <person name="Hara R."/>
            <person name="Takeuchi K."/>
            <person name="Arita M."/>
            <person name="Imose N."/>
            <person name="Musashino K."/>
            <person name="Yuuki H."/>
            <person name="Oshima A."/>
            <person name="Sasaki N."/>
            <person name="Aotsuka S."/>
            <person name="Yoshikawa Y."/>
            <person name="Matsunawa H."/>
            <person name="Ichihara T."/>
            <person name="Shiohata N."/>
            <person name="Sano S."/>
            <person name="Moriya S."/>
            <person name="Momiyama H."/>
            <person name="Satoh N."/>
            <person name="Takami S."/>
            <person name="Terashima Y."/>
            <person name="Suzuki O."/>
            <person name="Nakagawa S."/>
            <person name="Senoh A."/>
            <person name="Mizoguchi H."/>
            <person name="Goto Y."/>
            <person name="Shimizu F."/>
            <person name="Wakebe H."/>
            <person name="Hishigaki H."/>
            <person name="Watanabe T."/>
            <person name="Sugiyama A."/>
            <person name="Takemoto M."/>
            <person name="Kawakami B."/>
            <person name="Yamazaki M."/>
            <person name="Watanabe K."/>
            <person name="Kumagai A."/>
            <person name="Itakura S."/>
            <person name="Fukuzumi Y."/>
            <person name="Fujimori Y."/>
            <person name="Komiyama M."/>
            <person name="Tashiro H."/>
            <person name="Tanigami A."/>
            <person name="Fujiwara T."/>
            <person name="Ono T."/>
            <person name="Yamada K."/>
            <person name="Fujii Y."/>
            <person name="Ozaki K."/>
            <person name="Hirao M."/>
            <person name="Ohmori Y."/>
            <person name="Kawabata A."/>
            <person name="Hikiji T."/>
            <person name="Kobatake N."/>
            <person name="Inagaki H."/>
            <person name="Ikema Y."/>
            <person name="Okamoto S."/>
            <person name="Okitani R."/>
            <person name="Kawakami T."/>
            <person name="Noguchi S."/>
            <person name="Itoh T."/>
            <person name="Shigeta K."/>
            <person name="Senba T."/>
            <person name="Matsumura K."/>
            <person name="Nakajima Y."/>
            <person name="Mizuno T."/>
            <person name="Morinaga M."/>
            <person name="Sasaki M."/>
            <person name="Togashi T."/>
            <person name="Oyama M."/>
            <person name="Hata H."/>
            <person name="Watanabe M."/>
            <person name="Komatsu T."/>
            <person name="Mizushima-Sugano J."/>
            <person name="Satoh T."/>
            <person name="Shirai Y."/>
            <person name="Takahashi Y."/>
            <person name="Nakagawa K."/>
            <person name="Okumura K."/>
            <person name="Nagase T."/>
            <person name="Nomura N."/>
            <person name="Kikuchi H."/>
            <person name="Masuho Y."/>
            <person name="Yamashita R."/>
            <person name="Nakai K."/>
            <person name="Yada T."/>
            <person name="Nakamura Y."/>
            <person name="Ohara O."/>
            <person name="Isogai T."/>
            <person name="Sugano S."/>
        </authorList>
    </citation>
    <scope>NUCLEOTIDE SEQUENCE [LARGE SCALE MRNA] (ISOFORM ALPHA)</scope>
    <scope>VARIANT GLN-136</scope>
</reference>
<reference key="7">
    <citation type="journal article" date="2006" name="Nature">
        <title>Human chromosome 11 DNA sequence and analysis including novel gene identification.</title>
        <authorList>
            <person name="Taylor T.D."/>
            <person name="Noguchi H."/>
            <person name="Totoki Y."/>
            <person name="Toyoda A."/>
            <person name="Kuroki Y."/>
            <person name="Dewar K."/>
            <person name="Lloyd C."/>
            <person name="Itoh T."/>
            <person name="Takeda T."/>
            <person name="Kim D.-W."/>
            <person name="She X."/>
            <person name="Barlow K.F."/>
            <person name="Bloom T."/>
            <person name="Bruford E."/>
            <person name="Chang J.L."/>
            <person name="Cuomo C.A."/>
            <person name="Eichler E."/>
            <person name="FitzGerald M.G."/>
            <person name="Jaffe D.B."/>
            <person name="LaButti K."/>
            <person name="Nicol R."/>
            <person name="Park H.-S."/>
            <person name="Seaman C."/>
            <person name="Sougnez C."/>
            <person name="Yang X."/>
            <person name="Zimmer A.R."/>
            <person name="Zody M.C."/>
            <person name="Birren B.W."/>
            <person name="Nusbaum C."/>
            <person name="Fujiyama A."/>
            <person name="Hattori M."/>
            <person name="Rogers J."/>
            <person name="Lander E.S."/>
            <person name="Sakaki Y."/>
        </authorList>
    </citation>
    <scope>NUCLEOTIDE SEQUENCE [LARGE SCALE GENOMIC DNA]</scope>
</reference>
<reference key="8">
    <citation type="submission" date="2005-09" db="EMBL/GenBank/DDBJ databases">
        <authorList>
            <person name="Mural R.J."/>
            <person name="Istrail S."/>
            <person name="Sutton G.G."/>
            <person name="Florea L."/>
            <person name="Halpern A.L."/>
            <person name="Mobarry C.M."/>
            <person name="Lippert R."/>
            <person name="Walenz B."/>
            <person name="Shatkay H."/>
            <person name="Dew I."/>
            <person name="Miller J.R."/>
            <person name="Flanigan M.J."/>
            <person name="Edwards N.J."/>
            <person name="Bolanos R."/>
            <person name="Fasulo D."/>
            <person name="Halldorsson B.V."/>
            <person name="Hannenhalli S."/>
            <person name="Turner R."/>
            <person name="Yooseph S."/>
            <person name="Lu F."/>
            <person name="Nusskern D.R."/>
            <person name="Shue B.C."/>
            <person name="Zheng X.H."/>
            <person name="Zhong F."/>
            <person name="Delcher A.L."/>
            <person name="Huson D.H."/>
            <person name="Kravitz S.A."/>
            <person name="Mouchard L."/>
            <person name="Reinert K."/>
            <person name="Remington K.A."/>
            <person name="Clark A.G."/>
            <person name="Waterman M.S."/>
            <person name="Eichler E.E."/>
            <person name="Adams M.D."/>
            <person name="Hunkapiller M.W."/>
            <person name="Myers E.W."/>
            <person name="Venter J.C."/>
        </authorList>
    </citation>
    <scope>NUCLEOTIDE SEQUENCE [LARGE SCALE GENOMIC DNA]</scope>
</reference>
<reference key="9">
    <citation type="submission" date="2007-11" db="EMBL/GenBank/DDBJ databases">
        <authorList>
            <consortium name="NIEHS SNPs program"/>
        </authorList>
    </citation>
    <scope>NUCLEOTIDE SEQUENCE [GENOMIC DNA]</scope>
    <scope>VARIANTS SER-31; TYR-43; TYR-58; GLU-110; PHE-112; GLN-136; ASP-249; TYR-419; SER-467 AND LEU-479</scope>
</reference>
<reference key="10">
    <citation type="journal article" date="2004" name="Genome Res.">
        <title>The status, quality, and expansion of the NIH full-length cDNA project: the Mammalian Gene Collection (MGC).</title>
        <authorList>
            <consortium name="The MGC Project Team"/>
        </authorList>
    </citation>
    <scope>NUCLEOTIDE SEQUENCE [LARGE SCALE MRNA] (ISOFORM GAMMA)</scope>
    <source>
        <tissue>Rhabdomyosarcoma</tissue>
    </source>
</reference>
<reference key="11">
    <citation type="journal article" date="2003" name="Exp. Cell Res.">
        <title>BTBD1 and BTBD2 colocalize to cytoplasmic bodies with the RBCC/tripartite motif protein, TRIM5delta.</title>
        <authorList>
            <person name="Xu L."/>
            <person name="Yang L."/>
            <person name="Moitra P.K."/>
            <person name="Hashimoto K."/>
            <person name="Rallabhandi P."/>
            <person name="Kaul S."/>
            <person name="Meroni G."/>
            <person name="Jensen J.P."/>
            <person name="Weissman A.M."/>
            <person name="D'Arpa P."/>
        </authorList>
    </citation>
    <scope>FUNCTION</scope>
    <scope>SUBCELLULAR LOCATION</scope>
    <scope>INTERACTION WITH BTBD1 AND BTBD2</scope>
</reference>
<reference key="12">
    <citation type="journal article" date="2006" name="J. Virol.">
        <title>Retroviral restriction factors Fv1 and TRIM5alpha act independently and can compete for incoming virus before reverse transcription.</title>
        <authorList>
            <person name="Passerini L.D."/>
            <person name="Keckesova Z."/>
            <person name="Towers G.J."/>
        </authorList>
    </citation>
    <scope>FUNCTION (ISOFORM ALPHA)</scope>
</reference>
<reference key="13">
    <citation type="journal article" date="2006" name="J. Virol.">
        <title>Removal of arginine 332 allows human TRIM5alpha to bind human immunodeficiency virus capsids and to restrict infection.</title>
        <authorList>
            <person name="Li Y."/>
            <person name="Li X."/>
            <person name="Stremlau M."/>
            <person name="Lee M."/>
            <person name="Sodroski J."/>
        </authorList>
    </citation>
    <scope>MUTAGENESIS OF ARG-332</scope>
</reference>
<reference key="14">
    <citation type="journal article" date="2006" name="Virology">
        <title>Cyclophilin A: an auxiliary but not necessary cofactor for TRIM5alpha restriction of HIV-1.</title>
        <authorList>
            <person name="Stremlau M."/>
            <person name="Song B."/>
            <person name="Javanbakht H."/>
            <person name="Perron M."/>
            <person name="Sodroski J."/>
        </authorList>
    </citation>
    <scope>FUNCTION (ISOFORM ALPHA)</scope>
</reference>
<reference key="15">
    <citation type="journal article" date="2007" name="J. Virol.">
        <title>Cyclophilin A, TRIM5, and resistance to human immunodeficiency virus type 1 infection.</title>
        <authorList>
            <person name="Luban J."/>
        </authorList>
    </citation>
    <scope>REVIEW</scope>
</reference>
<reference key="16">
    <citation type="journal article" date="2007" name="Virology">
        <title>Unique features of TRIM5alpha among closely related human TRIM family members.</title>
        <authorList>
            <person name="Li X."/>
            <person name="Gold B."/>
            <person name="O'hUigin C."/>
            <person name="Diaz-Griffero F."/>
            <person name="Song B."/>
            <person name="Si Z."/>
            <person name="Li Y."/>
            <person name="Yuan W."/>
            <person name="Stremlau M."/>
            <person name="Mische C."/>
            <person name="Javanbakht H."/>
            <person name="Scally M."/>
            <person name="Winkler C."/>
            <person name="Dean M."/>
            <person name="Sodroski J."/>
        </authorList>
    </citation>
    <scope>FUNCTION</scope>
    <scope>SUBUNIT</scope>
    <scope>INTERACTION WITH TRIM6 AND TRIM34</scope>
</reference>
<reference key="17">
    <citation type="journal article" date="2010" name="J. Biol. Chem.">
        <title>Hsp70 interacts with the retroviral restriction factor TRIM5alpha and assists the folding of TRIM5alpha.</title>
        <authorList>
            <person name="Hwang C.Y."/>
            <person name="Holl J."/>
            <person name="Rajan D."/>
            <person name="Lee Y."/>
            <person name="Kim S."/>
            <person name="Um M."/>
            <person name="Kwon K.S."/>
            <person name="Song B."/>
        </authorList>
    </citation>
    <scope>INTERACTION WITH HSPA1A/B</scope>
</reference>
<reference key="18">
    <citation type="journal article" date="2010" name="J. Virol.">
        <title>p62/sequestosome-1 associates with and sustains the expression of retroviral restriction factor TRIM5alpha.</title>
        <authorList>
            <person name="O'Connor C."/>
            <person name="Pertel T."/>
            <person name="Gray S."/>
            <person name="Robia S.L."/>
            <person name="Bakowska J.C."/>
            <person name="Luban J."/>
            <person name="Campbell E.M."/>
        </authorList>
    </citation>
    <scope>INTERACTION WITH SQSTM1</scope>
    <scope>SUBCELLULAR LOCATION</scope>
</reference>
<reference key="19">
    <citation type="journal article" date="2011" name="AIDS Res. Hum. Retroviruses">
        <title>Recent insights into the mechanism and consequences of TRIM5alpha retroviral restriction.</title>
        <authorList>
            <person name="Sastri J."/>
            <person name="Campbell E.M."/>
        </authorList>
    </citation>
    <scope>REVIEW</scope>
    <scope>PROTEASOMAL DEGRADATION</scope>
</reference>
<reference key="20">
    <citation type="journal article" date="2011" name="Cell Host Microbe">
        <title>Trim5 TAKes on pattern recognition.</title>
        <authorList>
            <person name="Tareen S.U."/>
            <person name="Emerman M."/>
        </authorList>
    </citation>
    <scope>REVIEW</scope>
</reference>
<reference key="21">
    <citation type="journal article" date="2011" name="J. Biol. Chem.">
        <title>Determinants of the higher order association of the restriction factor TRIM5alpha and other tripartite motif (TRIM) proteins.</title>
        <authorList>
            <person name="Li X."/>
            <person name="Yeung D.F."/>
            <person name="Fiegen A.M."/>
            <person name="Sodroski J."/>
        </authorList>
    </citation>
    <scope>INTERACTION WITH TRIM6 AND TRIM34</scope>
</reference>
<reference key="22">
    <citation type="journal article" date="2011" name="Nature">
        <title>Immunology: TRIM5 does double duty.</title>
        <authorList>
            <person name="Aiken C."/>
            <person name="Joyce S."/>
        </authorList>
    </citation>
    <scope>REVIEW</scope>
</reference>
<reference key="23">
    <citation type="journal article" date="2011" name="Nature">
        <title>TRIM5 is an innate immune sensor for the retrovirus capsid lattice.</title>
        <authorList>
            <person name="Pertel T."/>
            <person name="Hausmann S."/>
            <person name="Morger D."/>
            <person name="Zueger S."/>
            <person name="Guerra J."/>
            <person name="Lascano J."/>
            <person name="Reinhard C."/>
            <person name="Santoni F.A."/>
            <person name="Uchil P.D."/>
            <person name="Chatel L."/>
            <person name="Bisiaux A."/>
            <person name="Albert M.L."/>
            <person name="Strambio-De-Castillia C."/>
            <person name="Mothes W."/>
            <person name="Pizzato M."/>
            <person name="Gruetter M.G."/>
            <person name="Luban J."/>
        </authorList>
    </citation>
    <scope>FUNCTION</scope>
    <scope>INTERACTION WITH MAP3K7/TAK1; TAB2 AND TAB3</scope>
</reference>
<reference key="24">
    <citation type="journal article" date="2011" name="Nat. Rev. Microbiol.">
        <title>Antiviral immunity: TRIM5 moonlights as a pattern recognition receptor.</title>
        <authorList>
            <person name="Jermy A."/>
        </authorList>
    </citation>
    <scope>REVIEW</scope>
</reference>
<reference key="25">
    <citation type="journal article" date="2011" name="Retrovirology">
        <title>TRIM5alpha associates with proteasomal subunits in cells while in complex with HIV-1 virions.</title>
        <authorList>
            <person name="Lukic Z."/>
            <person name="Hausmann S."/>
            <person name="Sebastian S."/>
            <person name="Rucci J."/>
            <person name="Sastri J."/>
            <person name="Robia S.L."/>
            <person name="Luban J."/>
            <person name="Campbell E.M."/>
        </authorList>
    </citation>
    <scope>INTERACTION WITH PSMC2</scope>
</reference>
<reference key="26">
    <citation type="journal article" date="2011" name="Virology">
        <title>Human Trim5alpha has additional activities that are uncoupled from retroviral capsid recognition.</title>
        <authorList>
            <person name="Tareen S.U."/>
            <person name="Emerman M."/>
        </authorList>
    </citation>
    <scope>FUNCTION</scope>
</reference>
<reference key="27">
    <citation type="journal article" date="2011" name="Viruses">
        <title>TRIM5 acts as more than a retroviral restriction factor.</title>
        <authorList>
            <person name="de Silva S."/>
            <person name="Wu L."/>
        </authorList>
    </citation>
    <scope>REVIEW</scope>
</reference>
<reference key="28">
    <citation type="journal article" date="2012" name="Curr. Opin. Virol.">
        <title>TRIM5 structure, HIV-1 capsid recognition, and innate immune signaling.</title>
        <authorList>
            <person name="Gruetter M.G."/>
            <person name="Luban J."/>
        </authorList>
    </citation>
    <scope>REVIEW</scope>
</reference>
<reference key="29">
    <citation type="journal article" date="2012" name="Front. Microbiol.">
        <title>TRIM5alpha and species tropism of HIV/SIV.</title>
        <authorList>
            <person name="Nakayama E.E."/>
            <person name="Shioda T."/>
        </authorList>
    </citation>
    <scope>REVIEW</scope>
    <scope>FUNCTION</scope>
</reference>
<reference key="30">
    <citation type="journal article" date="2012" name="Mol. Cell. Proteomics">
        <title>Comparative large-scale characterisation of plant vs. mammal proteins reveals similar and idiosyncratic N-alpha acetylation features.</title>
        <authorList>
            <person name="Bienvenut W.V."/>
            <person name="Sumpton D."/>
            <person name="Martinez A."/>
            <person name="Lilla S."/>
            <person name="Espagne C."/>
            <person name="Meinnel T."/>
            <person name="Giglione C."/>
        </authorList>
    </citation>
    <scope>ACETYLATION [LARGE SCALE ANALYSIS] AT ALA-2</scope>
    <scope>CLEAVAGE OF INITIATOR METHIONINE [LARGE SCALE ANALYSIS]</scope>
    <scope>IDENTIFICATION BY MASS SPECTROMETRY [LARGE SCALE ANALYSIS]</scope>
</reference>
<reference key="31">
    <citation type="journal article" date="2013" name="J. Proteome Res.">
        <title>Toward a comprehensive characterization of a human cancer cell phosphoproteome.</title>
        <authorList>
            <person name="Zhou H."/>
            <person name="Di Palma S."/>
            <person name="Preisinger C."/>
            <person name="Peng M."/>
            <person name="Polat A.N."/>
            <person name="Heck A.J."/>
            <person name="Mohammed S."/>
        </authorList>
    </citation>
    <scope>PHOSPHORYLATION [LARGE SCALE ANALYSIS] AT SER-86</scope>
    <scope>IDENTIFICATION BY MASS SPECTROMETRY [LARGE SCALE ANALYSIS]</scope>
    <source>
        <tissue>Cervix carcinoma</tissue>
        <tissue>Erythroleukemia</tissue>
    </source>
</reference>
<reference key="32">
    <citation type="journal article" date="2014" name="Dev. Cell">
        <title>TRIM proteins regulate autophagy and can target autophagic substrates by direct recognition.</title>
        <authorList>
            <person name="Mandell M.A."/>
            <person name="Jain A."/>
            <person name="Arko-Mensah J."/>
            <person name="Chauhan S."/>
            <person name="Kimura T."/>
            <person name="Dinkins C."/>
            <person name="Silvestri G."/>
            <person name="Munch J."/>
            <person name="Kirchhoff F."/>
            <person name="Simonsen A."/>
            <person name="Wei Y."/>
            <person name="Levine B."/>
            <person name="Johansen T."/>
            <person name="Deretic V."/>
        </authorList>
    </citation>
    <scope>FUNCTION</scope>
    <scope>INTERACTION WITH ULK1; SQSTM1; GABARAP; GABARAPL1; GABARAPL2; MAP1LC3A; MAP1LC3C AND BECN1</scope>
    <scope>SUBCELLULAR LOCATION</scope>
</reference>
<reference key="33">
    <citation type="journal article" date="2014" name="J. Proteomics">
        <title>An enzyme assisted RP-RPLC approach for in-depth analysis of human liver phosphoproteome.</title>
        <authorList>
            <person name="Bian Y."/>
            <person name="Song C."/>
            <person name="Cheng K."/>
            <person name="Dong M."/>
            <person name="Wang F."/>
            <person name="Huang J."/>
            <person name="Sun D."/>
            <person name="Wang L."/>
            <person name="Ye M."/>
            <person name="Zou H."/>
        </authorList>
    </citation>
    <scope>IDENTIFICATION BY MASS SPECTROMETRY [LARGE SCALE ANALYSIS]</scope>
    <source>
        <tissue>Liver</tissue>
    </source>
</reference>
<reference key="34">
    <citation type="journal article" date="2011" name="J. Virol.">
        <title>Contribution of E3-ubiquitin ligase activity to HIV-1 restriction by TRIM5alpha(rh): structure of the RING domain of TRIM5alpha.</title>
        <authorList>
            <person name="Lienlaf M."/>
            <person name="Hayashi F."/>
            <person name="Di Nunzio F."/>
            <person name="Tochio N."/>
            <person name="Kigawa T."/>
            <person name="Yokoyama S."/>
            <person name="Diaz-Griffero F."/>
        </authorList>
    </citation>
    <scope>STRUCTURE BY NMR OF 1-78</scope>
</reference>
<reference key="35">
    <citation type="submission" date="2009-02" db="PDB data bank">
        <title>Solution structure of the b-box domain from tripartite motif-containing protein 5.</title>
        <authorList>
            <consortium name="RIKEN structural genomics initiative (RSGI)"/>
        </authorList>
    </citation>
    <scope>STRUCTURE BY NMR OF 86-129</scope>
</reference>
<comment type="function">
    <text evidence="8 12 13 16 17 18 21 23">Capsid-specific restriction factor that prevents infection from non-host-adapted retroviruses. Blocks viral replication early in the life cycle, after viral entry but before reverse transcription. In addition to acting as a capsid-specific restriction factor, also acts as a pattern recognition receptor that activates innate immune signaling in response to the retroviral capsid lattice. Binding to the viral capsid triggers its E3 ubiquitin ligase activity, and in concert with the heterodimeric ubiquitin conjugating enzyme complex UBE2V1-UBE2N (also known as UBC13-UEV1A complex) generates 'Lys-63'-linked polyubiquitin chains, which in turn are catalysts in the autophosphorylation of the MAP3K7/TAK1 complex (includes TAK1, TAB2, and TAB3). Activation of the MAP3K7/TAK1 complex by autophosphorylation results in the induction and expression of NF-kappa-B and MAPK-responsive inflammatory genes, thereby leading to an innate immune response in the infected cell. Restricts infection by N-tropic murine leukemia virus (N-MLV), equine infectious anemia virus (EIAV), simian immunodeficiency virus of macaques (SIVmac), feline immunodeficiency virus (FIV), and bovine immunodeficiency virus (BIV) (PubMed:17156811). Plays a role in regulating autophagy through activation of autophagy regulator BECN1 by causing its dissociation from its inhibitors BCL2 and TAB2 (PubMed:25127057). Also plays a role in autophagy by acting as a selective autophagy receptor which recognizes and targets HIV-1 capsid protein p24 for autophagic destruction (PubMed:25127057).</text>
</comment>
<comment type="catalytic activity">
    <reaction>
        <text>S-ubiquitinyl-[E2 ubiquitin-conjugating enzyme]-L-cysteine + [acceptor protein]-L-lysine = [E2 ubiquitin-conjugating enzyme]-L-cysteine + N(6)-ubiquitinyl-[acceptor protein]-L-lysine.</text>
        <dbReference type="EC" id="2.3.2.27"/>
    </reaction>
</comment>
<comment type="pathway">
    <text>Protein modification; protein ubiquitination.</text>
</comment>
<comment type="subunit">
    <text evidence="1 8 12 14 15 17 19 20 23">Can form homodimers and homotrimers. In addition to lower-order dimerization, also exhibits a higher-order multimerization and both low- and high-order multimerizations are essential for its restriction activity. Isoform Delta interacts with BTBD1 and BTBD2. Interacts with PSMC4, PSMC5, PSMD7 and HSPA8/HSC70 (By similarity). Interacts (via B30.2/SPRY domain) with HSPA1A/B. Interacts with PSMC2, MAP3K7/TAK1, TAB2 and TAB3 (PubMed:21512573, PubMed:22078707). Interacts with SQSTM1 (PubMed:20357094, PubMed:25127057). Interacts with TRIM6 and TRIM34 (PubMed:17156811, PubMed:21680743). Interacts with ULK1 (phosphorylated form), GABARAP, GABARAPL1, GABARAPL2, MAP1LC3A, MAP1LC3C and BECN1 (PubMed:25127057).</text>
</comment>
<comment type="interaction">
    <interactant intactId="EBI-924214">
        <id>Q9C035</id>
    </interactant>
    <interactant intactId="EBI-349854">
        <id>P13569</id>
        <label>CFTR</label>
    </interactant>
    <organismsDiffer>false</organismsDiffer>
    <experiments>3</experiments>
</comment>
<comment type="interaction">
    <interactant intactId="EBI-924214">
        <id>Q9C035</id>
    </interactant>
    <interactant intactId="EBI-1045459">
        <id>O95863</id>
        <label>SNAI1</label>
    </interactant>
    <organismsDiffer>false</organismsDiffer>
    <experiments>3</experiments>
</comment>
<comment type="interaction">
    <interactant intactId="EBI-924214">
        <id>Q9C035</id>
    </interactant>
    <interactant intactId="EBI-742790">
        <id>Q13049</id>
        <label>TRIM32</label>
    </interactant>
    <organismsDiffer>false</organismsDiffer>
    <experiments>2</experiments>
</comment>
<comment type="interaction">
    <interactant intactId="EBI-924214">
        <id>Q9C035</id>
    </interactant>
    <interactant intactId="EBI-924214">
        <id>Q9C035</id>
        <label>TRIM5</label>
    </interactant>
    <organismsDiffer>false</organismsDiffer>
    <experiments>3</experiments>
</comment>
<comment type="interaction">
    <interactant intactId="EBI-924230">
        <id>Q9C035-1</id>
    </interactant>
    <interactant intactId="EBI-924086">
        <id>Q2Y080</id>
    </interactant>
    <organismsDiffer>true</organismsDiffer>
    <experiments>3</experiments>
</comment>
<comment type="interaction">
    <interactant intactId="EBI-12840050">
        <id>Q9C035-3</id>
    </interactant>
    <interactant intactId="EBI-2339219">
        <id>Q08426</id>
        <label>EHHADH</label>
    </interactant>
    <organismsDiffer>false</organismsDiffer>
    <experiments>3</experiments>
</comment>
<comment type="interaction">
    <interactant intactId="EBI-12840050">
        <id>Q9C035-3</id>
    </interactant>
    <interactant intactId="EBI-21591415">
        <id>P13473-2</id>
        <label>LAMP2</label>
    </interactant>
    <organismsDiffer>false</organismsDiffer>
    <experiments>3</experiments>
</comment>
<comment type="interaction">
    <interactant intactId="EBI-12840050">
        <id>Q9C035-3</id>
    </interactant>
    <interactant intactId="EBI-2514004">
        <id>Q5T2T1</id>
        <label>MPP7</label>
    </interactant>
    <organismsDiffer>false</organismsDiffer>
    <experiments>3</experiments>
</comment>
<comment type="interaction">
    <interactant intactId="EBI-12840050">
        <id>Q9C035-3</id>
    </interactant>
    <interactant intactId="EBI-11980301">
        <id>Q8N3F0</id>
        <label>MTURN</label>
    </interactant>
    <organismsDiffer>false</organismsDiffer>
    <experiments>3</experiments>
</comment>
<comment type="interaction">
    <interactant intactId="EBI-12840050">
        <id>Q9C035-3</id>
    </interactant>
    <interactant intactId="EBI-741158">
        <id>Q96HA8</id>
        <label>NTAQ1</label>
    </interactant>
    <organismsDiffer>false</organismsDiffer>
    <experiments>3</experiments>
</comment>
<comment type="interaction">
    <interactant intactId="EBI-12840050">
        <id>Q9C035-3</id>
    </interactant>
    <interactant intactId="EBI-347996">
        <id>O43765</id>
        <label>SGTA</label>
    </interactant>
    <organismsDiffer>false</organismsDiffer>
    <experiments>3</experiments>
</comment>
<comment type="interaction">
    <interactant intactId="EBI-12840050">
        <id>Q9C035-3</id>
    </interactant>
    <interactant intactId="EBI-2623095">
        <id>Q9Y371</id>
        <label>SH3GLB1</label>
    </interactant>
    <organismsDiffer>false</organismsDiffer>
    <experiments>3</experiments>
</comment>
<comment type="interaction">
    <interactant intactId="EBI-12840050">
        <id>Q9C035-3</id>
    </interactant>
    <interactant intactId="EBI-10241197">
        <id>Q3SY00</id>
        <label>TSGA10IP</label>
    </interactant>
    <organismsDiffer>false</organismsDiffer>
    <experiments>3</experiments>
</comment>
<comment type="interaction">
    <interactant intactId="EBI-12840050">
        <id>Q9C035-3</id>
    </interactant>
    <interactant intactId="EBI-7353612">
        <id>P57075-2</id>
        <label>UBASH3A</label>
    </interactant>
    <organismsDiffer>false</organismsDiffer>
    <experiments>3</experiments>
</comment>
<comment type="interaction">
    <interactant intactId="EBI-12840050">
        <id>Q9C035-3</id>
    </interactant>
    <interactant intactId="EBI-473850">
        <id>P61086</id>
        <label>UBE2K</label>
    </interactant>
    <organismsDiffer>false</organismsDiffer>
    <experiments>6</experiments>
</comment>
<comment type="interaction">
    <interactant intactId="EBI-12840050">
        <id>Q9C035-3</id>
    </interactant>
    <interactant intactId="EBI-515331">
        <id>P07947</id>
        <label>YES1</label>
    </interactant>
    <organismsDiffer>false</organismsDiffer>
    <experiments>3</experiments>
</comment>
<comment type="subcellular location">
    <subcellularLocation>
        <location evidence="23">Cytoplasm</location>
    </subcellularLocation>
    <subcellularLocation>
        <location evidence="2">Nucleus</location>
    </subcellularLocation>
    <text evidence="2 8 15 23">Predominantly localizes in cytoplasmic bodies (PubMed:12878161, PubMed:20357094). Localization may be influenced by the coexpression of other TRIM proteins, hence partial nuclear localization is observed in the presence of TRIM22 or TRIM27 (By similarity). In cytoplasmic bodies, colocalizes with proteasomal subunits and SQSTM1 (By similarity).</text>
</comment>
<comment type="alternative products">
    <event type="alternative splicing"/>
    <isoform>
        <id>Q9C035-1</id>
        <name>Alpha</name>
        <sequence type="displayed"/>
    </isoform>
    <isoform>
        <id>Q9C035-2</id>
        <name>Beta</name>
        <sequence type="described" ref="VSP_009010 VSP_009011"/>
    </isoform>
    <isoform>
        <id>Q9C035-3</id>
        <name>Gamma</name>
        <sequence type="described" ref="VSP_009012 VSP_009013"/>
    </isoform>
    <isoform>
        <id>Q9C035-4</id>
        <name>Delta</name>
        <sequence type="described" ref="VSP_009014 VSP_009015"/>
    </isoform>
    <isoform>
        <id>Q9C035-5</id>
        <name>Epsilon</name>
        <name>Kappa</name>
        <sequence type="described" ref="VSP_009016 VSP_009017"/>
    </isoform>
    <isoform>
        <id>Q9C035-6</id>
        <name>Iota</name>
        <sequence type="described" ref="VSP_044095 VSP_044096"/>
    </isoform>
</comment>
<comment type="domain">
    <text evidence="2 22">The B box-type zinc finger domain and the coiled-coil domain contribute to the higher and low order multimerization respectively which is essential for restriction activity (PubMed:22482711). The coiled coil domain is important for higher order multimerization by promoting the initial dimerization (By similarity).</text>
</comment>
<comment type="domain">
    <text evidence="22">The B30.2/SPRY domain acts as a capsid recognition domain. Polymorphisms in this domain explain the observed species-specific differences among orthologs (PubMed:22482711).</text>
</comment>
<comment type="domain">
    <text evidence="22">The RING-type zinc finger domain confers E3 ubiquitin ligase activity and is essential for retrovirus restriction activity, autoubiquitination and higher-order multimerization.</text>
</comment>
<comment type="PTM">
    <text>Degraded in a proteasome-independent fashion in the absence of viral infection but in a proteasome-dependent fashion following exposure to restriction sensitive virus.</text>
</comment>
<comment type="PTM">
    <text evidence="13">Autoubiquitinated in a RING finger- and UBE2D2-dependent manner. Monoubiquitinated by TRIM21. Deubiquitinated by Yersinia YopJ. Ubiquitination may not lead to proteasomal degradation.</text>
</comment>
<comment type="miscellaneous">
    <molecule>Isoform Beta</molecule>
    <text evidence="28">Probable artifact.</text>
</comment>
<comment type="miscellaneous">
    <molecule>Isoform Iota</molecule>
    <text evidence="28">Has dominant-negative activity against TRIM5alpha. Does not inhibit HIV-1 replication.</text>
</comment>
<comment type="similarity">
    <text evidence="28">Belongs to the TRIM/RBCC family.</text>
</comment>
<dbReference type="EC" id="2.3.2.27"/>
<dbReference type="EMBL" id="AF220025">
    <property type="protein sequence ID" value="AAG53479.1"/>
    <property type="molecule type" value="mRNA"/>
</dbReference>
<dbReference type="EMBL" id="AF220026">
    <property type="protein sequence ID" value="AAG53480.1"/>
    <property type="molecule type" value="mRNA"/>
</dbReference>
<dbReference type="EMBL" id="AF220027">
    <property type="protein sequence ID" value="AAG53481.1"/>
    <property type="molecule type" value="mRNA"/>
</dbReference>
<dbReference type="EMBL" id="AF220028">
    <property type="protein sequence ID" value="AAG53482.1"/>
    <property type="molecule type" value="mRNA"/>
</dbReference>
<dbReference type="EMBL" id="AF220029">
    <property type="protein sequence ID" value="AAG53483.1"/>
    <property type="molecule type" value="mRNA"/>
</dbReference>
<dbReference type="EMBL" id="AY625000">
    <property type="protein sequence ID" value="AAT48101.1"/>
    <property type="molecule type" value="mRNA"/>
</dbReference>
<dbReference type="EMBL" id="DQ301444">
    <property type="protein sequence ID" value="ABC00997.1"/>
    <property type="molecule type" value="Genomic_DNA"/>
</dbReference>
<dbReference type="EMBL" id="DQ301445">
    <property type="protein sequence ID" value="ABC00998.1"/>
    <property type="molecule type" value="Genomic_DNA"/>
</dbReference>
<dbReference type="EMBL" id="DQ301446">
    <property type="protein sequence ID" value="ABC00999.1"/>
    <property type="molecule type" value="Genomic_DNA"/>
</dbReference>
<dbReference type="EMBL" id="DQ301447">
    <property type="protein sequence ID" value="ABC01000.1"/>
    <property type="molecule type" value="Genomic_DNA"/>
</dbReference>
<dbReference type="EMBL" id="DQ301448">
    <property type="protein sequence ID" value="ABC01001.1"/>
    <property type="molecule type" value="Genomic_DNA"/>
</dbReference>
<dbReference type="EMBL" id="DQ301449">
    <property type="protein sequence ID" value="ABC01002.1"/>
    <property type="molecule type" value="Genomic_DNA"/>
</dbReference>
<dbReference type="EMBL" id="DQ301450">
    <property type="protein sequence ID" value="ABC01003.1"/>
    <property type="molecule type" value="Genomic_DNA"/>
</dbReference>
<dbReference type="EMBL" id="DQ301451">
    <property type="protein sequence ID" value="ABC01004.1"/>
    <property type="molecule type" value="Genomic_DNA"/>
</dbReference>
<dbReference type="EMBL" id="DQ301452">
    <property type="protein sequence ID" value="ABC01005.1"/>
    <property type="molecule type" value="Genomic_DNA"/>
</dbReference>
<dbReference type="EMBL" id="DQ301453">
    <property type="protein sequence ID" value="ABC01006.1"/>
    <property type="molecule type" value="Genomic_DNA"/>
</dbReference>
<dbReference type="EMBL" id="DQ301454">
    <property type="protein sequence ID" value="ABC01007.1"/>
    <property type="molecule type" value="Genomic_DNA"/>
</dbReference>
<dbReference type="EMBL" id="DQ301455">
    <property type="protein sequence ID" value="ABC01008.1"/>
    <property type="molecule type" value="Genomic_DNA"/>
</dbReference>
<dbReference type="EMBL" id="DQ301456">
    <property type="protein sequence ID" value="ABC01009.1"/>
    <property type="molecule type" value="Genomic_DNA"/>
</dbReference>
<dbReference type="EMBL" id="DQ301457">
    <property type="protein sequence ID" value="ABC01010.1"/>
    <property type="molecule type" value="Genomic_DNA"/>
</dbReference>
<dbReference type="EMBL" id="DQ301458">
    <property type="protein sequence ID" value="ABC01011.1"/>
    <property type="molecule type" value="Genomic_DNA"/>
</dbReference>
<dbReference type="EMBL" id="DQ301459">
    <property type="protein sequence ID" value="ABC01012.1"/>
    <property type="molecule type" value="Genomic_DNA"/>
</dbReference>
<dbReference type="EMBL" id="DQ301460">
    <property type="protein sequence ID" value="ABC01013.1"/>
    <property type="molecule type" value="Genomic_DNA"/>
</dbReference>
<dbReference type="EMBL" id="DQ301461">
    <property type="protein sequence ID" value="ABC01014.1"/>
    <property type="molecule type" value="Genomic_DNA"/>
</dbReference>
<dbReference type="EMBL" id="DQ301462">
    <property type="protein sequence ID" value="ABC01015.1"/>
    <property type="molecule type" value="Genomic_DNA"/>
</dbReference>
<dbReference type="EMBL" id="DQ301463">
    <property type="protein sequence ID" value="ABC01016.1"/>
    <property type="molecule type" value="Genomic_DNA"/>
</dbReference>
<dbReference type="EMBL" id="DQ301464">
    <property type="protein sequence ID" value="ABC01017.1"/>
    <property type="molecule type" value="Genomic_DNA"/>
</dbReference>
<dbReference type="EMBL" id="DQ301465">
    <property type="protein sequence ID" value="ABC01018.1"/>
    <property type="molecule type" value="Genomic_DNA"/>
</dbReference>
<dbReference type="EMBL" id="DQ301466">
    <property type="protein sequence ID" value="ABC01019.1"/>
    <property type="molecule type" value="Genomic_DNA"/>
</dbReference>
<dbReference type="EMBL" id="DQ301467">
    <property type="protein sequence ID" value="ABC01020.1"/>
    <property type="molecule type" value="Genomic_DNA"/>
</dbReference>
<dbReference type="EMBL" id="DQ301468">
    <property type="protein sequence ID" value="ABC01021.1"/>
    <property type="molecule type" value="Genomic_DNA"/>
</dbReference>
<dbReference type="EMBL" id="DQ301469">
    <property type="protein sequence ID" value="ABC01022.1"/>
    <property type="molecule type" value="Genomic_DNA"/>
</dbReference>
<dbReference type="EMBL" id="DQ301470">
    <property type="protein sequence ID" value="ABC01023.1"/>
    <property type="molecule type" value="Genomic_DNA"/>
</dbReference>
<dbReference type="EMBL" id="DQ301471">
    <property type="protein sequence ID" value="ABC01024.1"/>
    <property type="molecule type" value="Genomic_DNA"/>
</dbReference>
<dbReference type="EMBL" id="DQ301472">
    <property type="protein sequence ID" value="ABC01025.1"/>
    <property type="molecule type" value="Genomic_DNA"/>
</dbReference>
<dbReference type="EMBL" id="DQ301473">
    <property type="protein sequence ID" value="ABC01026.1"/>
    <property type="molecule type" value="Genomic_DNA"/>
</dbReference>
<dbReference type="EMBL" id="DQ301474">
    <property type="protein sequence ID" value="ABC01027.1"/>
    <property type="molecule type" value="Genomic_DNA"/>
</dbReference>
<dbReference type="EMBL" id="DQ301475">
    <property type="protein sequence ID" value="ABC01028.1"/>
    <property type="molecule type" value="Genomic_DNA"/>
</dbReference>
<dbReference type="EMBL" id="DQ301476">
    <property type="protein sequence ID" value="ABC01029.1"/>
    <property type="molecule type" value="Genomic_DNA"/>
</dbReference>
<dbReference type="EMBL" id="DQ301477">
    <property type="protein sequence ID" value="ABC01030.1"/>
    <property type="molecule type" value="Genomic_DNA"/>
</dbReference>
<dbReference type="EMBL" id="DQ301478">
    <property type="protein sequence ID" value="ABC01031.1"/>
    <property type="molecule type" value="Genomic_DNA"/>
</dbReference>
<dbReference type="EMBL" id="DQ301479">
    <property type="protein sequence ID" value="ABC01032.1"/>
    <property type="molecule type" value="Genomic_DNA"/>
</dbReference>
<dbReference type="EMBL" id="DQ301480">
    <property type="protein sequence ID" value="ABC01033.1"/>
    <property type="molecule type" value="Genomic_DNA"/>
</dbReference>
<dbReference type="EMBL" id="DQ288685">
    <property type="protein sequence ID" value="ABB90543.1"/>
    <property type="molecule type" value="mRNA"/>
</dbReference>
<dbReference type="EMBL" id="JF928461">
    <property type="protein sequence ID" value="AEN14475.1"/>
    <property type="molecule type" value="mRNA"/>
</dbReference>
<dbReference type="EMBL" id="JF928462">
    <property type="protein sequence ID" value="AEN14476.1"/>
    <property type="molecule type" value="mRNA"/>
</dbReference>
<dbReference type="EMBL" id="AK027593">
    <property type="protein sequence ID" value="BAB55218.1"/>
    <property type="molecule type" value="mRNA"/>
</dbReference>
<dbReference type="EMBL" id="AC015691">
    <property type="status" value="NOT_ANNOTATED_CDS"/>
    <property type="molecule type" value="Genomic_DNA"/>
</dbReference>
<dbReference type="EMBL" id="CH471064">
    <property type="protein sequence ID" value="EAW68771.1"/>
    <property type="molecule type" value="Genomic_DNA"/>
</dbReference>
<dbReference type="EMBL" id="CH471064">
    <property type="protein sequence ID" value="EAW68772.1"/>
    <property type="molecule type" value="Genomic_DNA"/>
</dbReference>
<dbReference type="EMBL" id="CH471064">
    <property type="protein sequence ID" value="EAW68774.1"/>
    <property type="molecule type" value="Genomic_DNA"/>
</dbReference>
<dbReference type="EMBL" id="CH471064">
    <property type="protein sequence ID" value="EAW68775.1"/>
    <property type="molecule type" value="Genomic_DNA"/>
</dbReference>
<dbReference type="EMBL" id="EU260465">
    <property type="protein sequence ID" value="ABW96352.1"/>
    <property type="molecule type" value="Genomic_DNA"/>
</dbReference>
<dbReference type="EMBL" id="CH471064">
    <property type="protein sequence ID" value="EAW68776.1"/>
    <property type="molecule type" value="Genomic_DNA"/>
</dbReference>
<dbReference type="EMBL" id="CH471064">
    <property type="protein sequence ID" value="EAW68777.1"/>
    <property type="molecule type" value="Genomic_DNA"/>
</dbReference>
<dbReference type="EMBL" id="BC021258">
    <property type="protein sequence ID" value="AAH21258.1"/>
    <property type="molecule type" value="mRNA"/>
</dbReference>
<dbReference type="CCDS" id="CCDS31392.1">
    <molecule id="Q9C035-4"/>
</dbReference>
<dbReference type="CCDS" id="CCDS31393.1">
    <molecule id="Q9C035-1"/>
</dbReference>
<dbReference type="CCDS" id="CCDS31394.1">
    <molecule id="Q9C035-3"/>
</dbReference>
<dbReference type="RefSeq" id="NP_149023.2">
    <molecule id="Q9C035-1"/>
    <property type="nucleotide sequence ID" value="NM_033034.3"/>
</dbReference>
<dbReference type="RefSeq" id="NP_149083.2">
    <molecule id="Q9C035-3"/>
    <property type="nucleotide sequence ID" value="NM_033092.4"/>
</dbReference>
<dbReference type="RefSeq" id="NP_149084.2">
    <molecule id="Q9C035-4"/>
    <property type="nucleotide sequence ID" value="NM_033093.4"/>
</dbReference>
<dbReference type="RefSeq" id="XP_005253240.1">
    <molecule id="Q9C035-1"/>
    <property type="nucleotide sequence ID" value="XM_005253183.4"/>
</dbReference>
<dbReference type="RefSeq" id="XP_005253241.1">
    <molecule id="Q9C035-4"/>
    <property type="nucleotide sequence ID" value="XM_005253184.4"/>
</dbReference>
<dbReference type="RefSeq" id="XP_011518729.1">
    <property type="nucleotide sequence ID" value="XM_011520427.1"/>
</dbReference>
<dbReference type="PDB" id="2ECV">
    <property type="method" value="NMR"/>
    <property type="chains" value="A=1-78"/>
</dbReference>
<dbReference type="PDB" id="2YRG">
    <property type="method" value="NMR"/>
    <property type="chains" value="A=86-129"/>
</dbReference>
<dbReference type="PDBsum" id="2ECV"/>
<dbReference type="PDBsum" id="2YRG"/>
<dbReference type="BMRB" id="Q9C035"/>
<dbReference type="SMR" id="Q9C035"/>
<dbReference type="BioGRID" id="124491">
    <property type="interactions" value="101"/>
</dbReference>
<dbReference type="ELM" id="Q9C035"/>
<dbReference type="FunCoup" id="Q9C035">
    <property type="interactions" value="205"/>
</dbReference>
<dbReference type="IntAct" id="Q9C035">
    <property type="interactions" value="46"/>
</dbReference>
<dbReference type="MINT" id="Q9C035"/>
<dbReference type="STRING" id="9606.ENSP00000369373"/>
<dbReference type="MoonDB" id="Q9C035">
    <property type="type" value="Predicted"/>
</dbReference>
<dbReference type="GlyGen" id="Q9C035">
    <property type="glycosylation" value="1 site"/>
</dbReference>
<dbReference type="iPTMnet" id="Q9C035"/>
<dbReference type="PhosphoSitePlus" id="Q9C035"/>
<dbReference type="BioMuta" id="TRIM5"/>
<dbReference type="DMDM" id="38605459"/>
<dbReference type="jPOST" id="Q9C035"/>
<dbReference type="MassIVE" id="Q9C035"/>
<dbReference type="PaxDb" id="9606-ENSP00000369373"/>
<dbReference type="PeptideAtlas" id="Q9C035"/>
<dbReference type="ProteomicsDB" id="79952">
    <molecule id="Q9C035-1"/>
</dbReference>
<dbReference type="ProteomicsDB" id="79953">
    <molecule id="Q9C035-2"/>
</dbReference>
<dbReference type="ProteomicsDB" id="79954">
    <molecule id="Q9C035-3"/>
</dbReference>
<dbReference type="ProteomicsDB" id="79955">
    <molecule id="Q9C035-4"/>
</dbReference>
<dbReference type="ProteomicsDB" id="79956">
    <molecule id="Q9C035-5"/>
</dbReference>
<dbReference type="Pumba" id="Q9C035"/>
<dbReference type="Antibodypedia" id="4609">
    <property type="antibodies" value="490 antibodies from 39 providers"/>
</dbReference>
<dbReference type="DNASU" id="85363"/>
<dbReference type="Ensembl" id="ENST00000380027.5">
    <molecule id="Q9C035-4"/>
    <property type="protein sequence ID" value="ENSP00000369366.1"/>
    <property type="gene ID" value="ENSG00000132256.20"/>
</dbReference>
<dbReference type="Ensembl" id="ENST00000380034.8">
    <molecule id="Q9C035-1"/>
    <property type="protein sequence ID" value="ENSP00000369373.3"/>
    <property type="gene ID" value="ENSG00000132256.20"/>
</dbReference>
<dbReference type="Ensembl" id="ENST00000396847.7">
    <molecule id="Q9C035-3"/>
    <property type="protein sequence ID" value="ENSP00000380058.3"/>
    <property type="gene ID" value="ENSG00000132256.20"/>
</dbReference>
<dbReference type="Ensembl" id="ENST00000433961.5">
    <molecule id="Q9C035-5"/>
    <property type="protein sequence ID" value="ENSP00000393052.1"/>
    <property type="gene ID" value="ENSG00000132256.20"/>
</dbReference>
<dbReference type="Ensembl" id="ENST00000684655.1">
    <molecule id="Q9C035-1"/>
    <property type="protein sequence ID" value="ENSP00000507420.1"/>
    <property type="gene ID" value="ENSG00000132256.20"/>
</dbReference>
<dbReference type="GeneID" id="85363"/>
<dbReference type="KEGG" id="hsa:85363"/>
<dbReference type="MANE-Select" id="ENST00000380034.8">
    <property type="protein sequence ID" value="ENSP00000369373.3"/>
    <property type="RefSeq nucleotide sequence ID" value="NM_033034.3"/>
    <property type="RefSeq protein sequence ID" value="NP_149023.2"/>
</dbReference>
<dbReference type="UCSC" id="uc001mbm.3">
    <molecule id="Q9C035-1"/>
    <property type="organism name" value="human"/>
</dbReference>
<dbReference type="AGR" id="HGNC:16276"/>
<dbReference type="CTD" id="85363"/>
<dbReference type="DisGeNET" id="85363"/>
<dbReference type="GeneCards" id="TRIM5"/>
<dbReference type="HGNC" id="HGNC:16276">
    <property type="gene designation" value="TRIM5"/>
</dbReference>
<dbReference type="HPA" id="ENSG00000132256">
    <property type="expression patterns" value="Low tissue specificity"/>
</dbReference>
<dbReference type="MIM" id="608487">
    <property type="type" value="gene"/>
</dbReference>
<dbReference type="neXtProt" id="NX_Q9C035"/>
<dbReference type="OpenTargets" id="ENSG00000132256"/>
<dbReference type="PharmGKB" id="PA38109"/>
<dbReference type="VEuPathDB" id="HostDB:ENSG00000132256"/>
<dbReference type="eggNOG" id="KOG2177">
    <property type="taxonomic scope" value="Eukaryota"/>
</dbReference>
<dbReference type="GeneTree" id="ENSGT00940000154647"/>
<dbReference type="HOGENOM" id="CLU_013137_0_3_1"/>
<dbReference type="InParanoid" id="Q9C035"/>
<dbReference type="OMA" id="CITANNR"/>
<dbReference type="OrthoDB" id="654191at2759"/>
<dbReference type="PAN-GO" id="Q9C035">
    <property type="GO annotations" value="13 GO annotations based on evolutionary models"/>
</dbReference>
<dbReference type="PhylomeDB" id="Q9C035"/>
<dbReference type="TreeFam" id="TF338674"/>
<dbReference type="BRENDA" id="2.3.2.27">
    <property type="organism ID" value="2681"/>
</dbReference>
<dbReference type="PathwayCommons" id="Q9C035"/>
<dbReference type="Reactome" id="R-HSA-877300">
    <property type="pathway name" value="Interferon gamma signaling"/>
</dbReference>
<dbReference type="SignaLink" id="Q9C035"/>
<dbReference type="SIGNOR" id="Q9C035"/>
<dbReference type="UniPathway" id="UPA00143"/>
<dbReference type="BioGRID-ORCS" id="85363">
    <property type="hits" value="9 hits in 1196 CRISPR screens"/>
</dbReference>
<dbReference type="CD-CODE" id="1C4BF022">
    <property type="entry name" value="Cytoplasmic bodies"/>
</dbReference>
<dbReference type="ChiTaRS" id="TRIM5">
    <property type="organism name" value="human"/>
</dbReference>
<dbReference type="EvolutionaryTrace" id="Q9C035"/>
<dbReference type="GeneWiki" id="TRIM5alpha"/>
<dbReference type="GenomeRNAi" id="85363"/>
<dbReference type="Pharos" id="Q9C035">
    <property type="development level" value="Tbio"/>
</dbReference>
<dbReference type="PRO" id="PR:Q9C035"/>
<dbReference type="Proteomes" id="UP000005640">
    <property type="component" value="Chromosome 11"/>
</dbReference>
<dbReference type="RNAct" id="Q9C035">
    <property type="molecule type" value="protein"/>
</dbReference>
<dbReference type="Bgee" id="ENSG00000132256">
    <property type="expression patterns" value="Expressed in sural nerve and 156 other cell types or tissues"/>
</dbReference>
<dbReference type="ExpressionAtlas" id="Q9C035">
    <property type="expression patterns" value="baseline and differential"/>
</dbReference>
<dbReference type="GO" id="GO:0005737">
    <property type="term" value="C:cytoplasm"/>
    <property type="evidence" value="ECO:0000314"/>
    <property type="project" value="UniProtKB"/>
</dbReference>
<dbReference type="GO" id="GO:0005829">
    <property type="term" value="C:cytosol"/>
    <property type="evidence" value="ECO:0000304"/>
    <property type="project" value="Reactome"/>
</dbReference>
<dbReference type="GO" id="GO:0005634">
    <property type="term" value="C:nucleus"/>
    <property type="evidence" value="ECO:0007669"/>
    <property type="project" value="UniProtKB-SubCell"/>
</dbReference>
<dbReference type="GO" id="GO:0000932">
    <property type="term" value="C:P-body"/>
    <property type="evidence" value="ECO:0000314"/>
    <property type="project" value="UniProtKB"/>
</dbReference>
<dbReference type="GO" id="GO:0042802">
    <property type="term" value="F:identical protein binding"/>
    <property type="evidence" value="ECO:0000353"/>
    <property type="project" value="IntAct"/>
</dbReference>
<dbReference type="GO" id="GO:0038187">
    <property type="term" value="F:pattern recognition receptor activity"/>
    <property type="evidence" value="ECO:0000314"/>
    <property type="project" value="UniProtKB"/>
</dbReference>
<dbReference type="GO" id="GO:0042803">
    <property type="term" value="F:protein homodimerization activity"/>
    <property type="evidence" value="ECO:0000353"/>
    <property type="project" value="UniProtKB"/>
</dbReference>
<dbReference type="GO" id="GO:0019901">
    <property type="term" value="F:protein kinase binding"/>
    <property type="evidence" value="ECO:0000353"/>
    <property type="project" value="UniProtKB"/>
</dbReference>
<dbReference type="GO" id="GO:0030674">
    <property type="term" value="F:protein-macromolecule adaptor activity"/>
    <property type="evidence" value="ECO:0000353"/>
    <property type="project" value="UniProtKB"/>
</dbReference>
<dbReference type="GO" id="GO:0003713">
    <property type="term" value="F:transcription coactivator activity"/>
    <property type="evidence" value="ECO:0000314"/>
    <property type="project" value="ARUK-UCL"/>
</dbReference>
<dbReference type="GO" id="GO:0061630">
    <property type="term" value="F:ubiquitin protein ligase activity"/>
    <property type="evidence" value="ECO:0000318"/>
    <property type="project" value="GO_Central"/>
</dbReference>
<dbReference type="GO" id="GO:0004842">
    <property type="term" value="F:ubiquitin-protein transferase activity"/>
    <property type="evidence" value="ECO:0000314"/>
    <property type="project" value="UniProtKB"/>
</dbReference>
<dbReference type="GO" id="GO:0008270">
    <property type="term" value="F:zinc ion binding"/>
    <property type="evidence" value="ECO:0007669"/>
    <property type="project" value="UniProtKB-KW"/>
</dbReference>
<dbReference type="GO" id="GO:0002218">
    <property type="term" value="P:activation of innate immune response"/>
    <property type="evidence" value="ECO:0000314"/>
    <property type="project" value="UniProtKB"/>
</dbReference>
<dbReference type="GO" id="GO:0006914">
    <property type="term" value="P:autophagy"/>
    <property type="evidence" value="ECO:0000314"/>
    <property type="project" value="UniProtKB"/>
</dbReference>
<dbReference type="GO" id="GO:0051607">
    <property type="term" value="P:defense response to virus"/>
    <property type="evidence" value="ECO:0000304"/>
    <property type="project" value="UniProtKB"/>
</dbReference>
<dbReference type="GO" id="GO:0046597">
    <property type="term" value="P:host-mediated suppression of symbiont invasion"/>
    <property type="evidence" value="ECO:0000314"/>
    <property type="project" value="UniProtKB"/>
</dbReference>
<dbReference type="GO" id="GO:0045087">
    <property type="term" value="P:innate immune response"/>
    <property type="evidence" value="ECO:0000314"/>
    <property type="project" value="UniProtKB"/>
</dbReference>
<dbReference type="GO" id="GO:0043123">
    <property type="term" value="P:positive regulation of canonical NF-kappaB signal transduction"/>
    <property type="evidence" value="ECO:0000314"/>
    <property type="project" value="UniProtKB"/>
</dbReference>
<dbReference type="GO" id="GO:0051091">
    <property type="term" value="P:positive regulation of DNA-binding transcription factor activity"/>
    <property type="evidence" value="ECO:0000315"/>
    <property type="project" value="UniProtKB"/>
</dbReference>
<dbReference type="GO" id="GO:0043410">
    <property type="term" value="P:positive regulation of MAPK cascade"/>
    <property type="evidence" value="ECO:0000315"/>
    <property type="project" value="UniProtKB"/>
</dbReference>
<dbReference type="GO" id="GO:0051092">
    <property type="term" value="P:positive regulation of NF-kappaB transcription factor activity"/>
    <property type="evidence" value="ECO:0000315"/>
    <property type="project" value="UniProtKB"/>
</dbReference>
<dbReference type="GO" id="GO:0070534">
    <property type="term" value="P:protein K63-linked ubiquitination"/>
    <property type="evidence" value="ECO:0000314"/>
    <property type="project" value="UniProtKB"/>
</dbReference>
<dbReference type="GO" id="GO:0010468">
    <property type="term" value="P:regulation of gene expression"/>
    <property type="evidence" value="ECO:0000318"/>
    <property type="project" value="GO_Central"/>
</dbReference>
<dbReference type="GO" id="GO:0031664">
    <property type="term" value="P:regulation of lipopolysaccharide-mediated signaling pathway"/>
    <property type="evidence" value="ECO:0000315"/>
    <property type="project" value="UniProtKB"/>
</dbReference>
<dbReference type="GO" id="GO:0032880">
    <property type="term" value="P:regulation of protein localization"/>
    <property type="evidence" value="ECO:0000315"/>
    <property type="project" value="UniProtKB"/>
</dbReference>
<dbReference type="GO" id="GO:0046596">
    <property type="term" value="P:regulation of viral entry into host cell"/>
    <property type="evidence" value="ECO:0000318"/>
    <property type="project" value="GO_Central"/>
</dbReference>
<dbReference type="GO" id="GO:0044790">
    <property type="term" value="P:suppression of viral release by host"/>
    <property type="evidence" value="ECO:0000314"/>
    <property type="project" value="UniProtKB"/>
</dbReference>
<dbReference type="CDD" id="cd19761">
    <property type="entry name" value="Bbox2_TRIM5-like"/>
    <property type="match status" value="1"/>
</dbReference>
<dbReference type="CDD" id="cd16591">
    <property type="entry name" value="RING-HC_TRIM5-like_C-IV"/>
    <property type="match status" value="1"/>
</dbReference>
<dbReference type="CDD" id="cd15822">
    <property type="entry name" value="SPRY_PRY_TRIM5"/>
    <property type="match status" value="1"/>
</dbReference>
<dbReference type="FunFam" id="2.60.120.920:FF:000023">
    <property type="entry name" value="Tripartite motif-containing 5 (Predicted)"/>
    <property type="match status" value="1"/>
</dbReference>
<dbReference type="FunFam" id="3.30.160.60:FF:000386">
    <property type="entry name" value="Tripartite motif-containing 5 (Predicted)"/>
    <property type="match status" value="1"/>
</dbReference>
<dbReference type="FunFam" id="3.30.40.10:FF:000144">
    <property type="entry name" value="Tripartite motif-containing 5 (Predicted)"/>
    <property type="match status" value="1"/>
</dbReference>
<dbReference type="Gene3D" id="2.60.120.920">
    <property type="match status" value="1"/>
</dbReference>
<dbReference type="Gene3D" id="3.30.160.60">
    <property type="entry name" value="Classic Zinc Finger"/>
    <property type="match status" value="1"/>
</dbReference>
<dbReference type="Gene3D" id="3.30.40.10">
    <property type="entry name" value="Zinc/RING finger domain, C3HC4 (zinc finger)"/>
    <property type="match status" value="1"/>
</dbReference>
<dbReference type="InterPro" id="IPR001870">
    <property type="entry name" value="B30.2/SPRY"/>
</dbReference>
<dbReference type="InterPro" id="IPR043136">
    <property type="entry name" value="B30.2/SPRY_sf"/>
</dbReference>
<dbReference type="InterPro" id="IPR003879">
    <property type="entry name" value="Butyrophylin_SPRY"/>
</dbReference>
<dbReference type="InterPro" id="IPR013320">
    <property type="entry name" value="ConA-like_dom_sf"/>
</dbReference>
<dbReference type="InterPro" id="IPR003877">
    <property type="entry name" value="SPRY_dom"/>
</dbReference>
<dbReference type="InterPro" id="IPR050143">
    <property type="entry name" value="TRIM/RBCC"/>
</dbReference>
<dbReference type="InterPro" id="IPR027370">
    <property type="entry name" value="Znf-RING_euk"/>
</dbReference>
<dbReference type="InterPro" id="IPR000315">
    <property type="entry name" value="Znf_B-box"/>
</dbReference>
<dbReference type="InterPro" id="IPR001841">
    <property type="entry name" value="Znf_RING"/>
</dbReference>
<dbReference type="InterPro" id="IPR013083">
    <property type="entry name" value="Znf_RING/FYVE/PHD"/>
</dbReference>
<dbReference type="InterPro" id="IPR017907">
    <property type="entry name" value="Znf_RING_CS"/>
</dbReference>
<dbReference type="PANTHER" id="PTHR24103">
    <property type="entry name" value="E3 UBIQUITIN-PROTEIN LIGASE TRIM"/>
    <property type="match status" value="1"/>
</dbReference>
<dbReference type="Pfam" id="PF00622">
    <property type="entry name" value="SPRY"/>
    <property type="match status" value="1"/>
</dbReference>
<dbReference type="Pfam" id="PF00643">
    <property type="entry name" value="zf-B_box"/>
    <property type="match status" value="1"/>
</dbReference>
<dbReference type="Pfam" id="PF13445">
    <property type="entry name" value="zf-RING_UBOX"/>
    <property type="match status" value="1"/>
</dbReference>
<dbReference type="PRINTS" id="PR01407">
    <property type="entry name" value="BUTYPHLNCDUF"/>
</dbReference>
<dbReference type="SMART" id="SM00336">
    <property type="entry name" value="BBOX"/>
    <property type="match status" value="1"/>
</dbReference>
<dbReference type="SMART" id="SM00184">
    <property type="entry name" value="RING"/>
    <property type="match status" value="1"/>
</dbReference>
<dbReference type="SMART" id="SM00449">
    <property type="entry name" value="SPRY"/>
    <property type="match status" value="1"/>
</dbReference>
<dbReference type="SUPFAM" id="SSF57845">
    <property type="entry name" value="B-box zinc-binding domain"/>
    <property type="match status" value="1"/>
</dbReference>
<dbReference type="SUPFAM" id="SSF49899">
    <property type="entry name" value="Concanavalin A-like lectins/glucanases"/>
    <property type="match status" value="1"/>
</dbReference>
<dbReference type="SUPFAM" id="SSF57850">
    <property type="entry name" value="RING/U-box"/>
    <property type="match status" value="1"/>
</dbReference>
<dbReference type="PROSITE" id="PS50188">
    <property type="entry name" value="B302_SPRY"/>
    <property type="match status" value="1"/>
</dbReference>
<dbReference type="PROSITE" id="PS50119">
    <property type="entry name" value="ZF_BBOX"/>
    <property type="match status" value="1"/>
</dbReference>
<dbReference type="PROSITE" id="PS00518">
    <property type="entry name" value="ZF_RING_1"/>
    <property type="match status" value="1"/>
</dbReference>
<dbReference type="PROSITE" id="PS50089">
    <property type="entry name" value="ZF_RING_2"/>
    <property type="match status" value="1"/>
</dbReference>
<evidence type="ECO:0000250" key="1"/>
<evidence type="ECO:0000250" key="2">
    <source>
        <dbReference type="UniProtKB" id="Q0PF16"/>
    </source>
</evidence>
<evidence type="ECO:0000255" key="3"/>
<evidence type="ECO:0000255" key="4">
    <source>
        <dbReference type="PROSITE-ProRule" id="PRU00024"/>
    </source>
</evidence>
<evidence type="ECO:0000255" key="5">
    <source>
        <dbReference type="PROSITE-ProRule" id="PRU00175"/>
    </source>
</evidence>
<evidence type="ECO:0000255" key="6">
    <source>
        <dbReference type="PROSITE-ProRule" id="PRU00548"/>
    </source>
</evidence>
<evidence type="ECO:0000269" key="7">
    <source>
    </source>
</evidence>
<evidence type="ECO:0000269" key="8">
    <source>
    </source>
</evidence>
<evidence type="ECO:0000269" key="9">
    <source>
    </source>
</evidence>
<evidence type="ECO:0000269" key="10">
    <source>
    </source>
</evidence>
<evidence type="ECO:0000269" key="11">
    <source>
    </source>
</evidence>
<evidence type="ECO:0000269" key="12">
    <source>
    </source>
</evidence>
<evidence type="ECO:0000269" key="13">
    <source>
    </source>
</evidence>
<evidence type="ECO:0000269" key="14">
    <source>
    </source>
</evidence>
<evidence type="ECO:0000269" key="15">
    <source>
    </source>
</evidence>
<evidence type="ECO:0000269" key="16">
    <source>
    </source>
</evidence>
<evidence type="ECO:0000269" key="17">
    <source>
    </source>
</evidence>
<evidence type="ECO:0000269" key="18">
    <source>
    </source>
</evidence>
<evidence type="ECO:0000269" key="19">
    <source>
    </source>
</evidence>
<evidence type="ECO:0000269" key="20">
    <source>
    </source>
</evidence>
<evidence type="ECO:0000269" key="21">
    <source>
    </source>
</evidence>
<evidence type="ECO:0000269" key="22">
    <source>
    </source>
</evidence>
<evidence type="ECO:0000269" key="23">
    <source>
    </source>
</evidence>
<evidence type="ECO:0000269" key="24">
    <source ref="9"/>
</evidence>
<evidence type="ECO:0000303" key="25">
    <source>
    </source>
</evidence>
<evidence type="ECO:0000303" key="26">
    <source>
    </source>
</evidence>
<evidence type="ECO:0000303" key="27">
    <source>
    </source>
</evidence>
<evidence type="ECO:0000305" key="28"/>
<evidence type="ECO:0007744" key="29">
    <source>
    </source>
</evidence>
<evidence type="ECO:0007744" key="30">
    <source>
    </source>
</evidence>
<evidence type="ECO:0007829" key="31">
    <source>
        <dbReference type="PDB" id="2ECV"/>
    </source>
</evidence>
<evidence type="ECO:0007829" key="32">
    <source>
        <dbReference type="PDB" id="2YRG"/>
    </source>
</evidence>
<gene>
    <name type="primary">TRIM5</name>
    <name type="synonym">RNF88</name>
</gene>
<protein>
    <recommendedName>
        <fullName>Tripartite motif-containing protein 5</fullName>
        <ecNumber>2.3.2.27</ecNumber>
    </recommendedName>
    <alternativeName>
        <fullName>RING finger protein 88</fullName>
    </alternativeName>
    <alternativeName>
        <fullName evidence="28">RING-type E3 ubiquitin transferase TRIM5</fullName>
    </alternativeName>
</protein>